<comment type="similarity">
    <text evidence="1">Belongs to the universal ribosomal protein uS2 family.</text>
</comment>
<accession>B0UCS0</accession>
<dbReference type="EMBL" id="CP000943">
    <property type="protein sequence ID" value="ACA19157.1"/>
    <property type="molecule type" value="Genomic_DNA"/>
</dbReference>
<dbReference type="RefSeq" id="WP_012334544.1">
    <property type="nucleotide sequence ID" value="NC_010511.1"/>
</dbReference>
<dbReference type="SMR" id="B0UCS0"/>
<dbReference type="STRING" id="426117.M446_4827"/>
<dbReference type="KEGG" id="met:M446_4827"/>
<dbReference type="eggNOG" id="COG0052">
    <property type="taxonomic scope" value="Bacteria"/>
</dbReference>
<dbReference type="HOGENOM" id="CLU_040318_2_1_5"/>
<dbReference type="GO" id="GO:0022627">
    <property type="term" value="C:cytosolic small ribosomal subunit"/>
    <property type="evidence" value="ECO:0007669"/>
    <property type="project" value="TreeGrafter"/>
</dbReference>
<dbReference type="GO" id="GO:0003735">
    <property type="term" value="F:structural constituent of ribosome"/>
    <property type="evidence" value="ECO:0007669"/>
    <property type="project" value="InterPro"/>
</dbReference>
<dbReference type="GO" id="GO:0006412">
    <property type="term" value="P:translation"/>
    <property type="evidence" value="ECO:0007669"/>
    <property type="project" value="UniProtKB-UniRule"/>
</dbReference>
<dbReference type="CDD" id="cd01425">
    <property type="entry name" value="RPS2"/>
    <property type="match status" value="1"/>
</dbReference>
<dbReference type="FunFam" id="1.10.287.610:FF:000001">
    <property type="entry name" value="30S ribosomal protein S2"/>
    <property type="match status" value="1"/>
</dbReference>
<dbReference type="Gene3D" id="1.10.150.20">
    <property type="entry name" value="5' to 3' exonuclease, C-terminal subdomain"/>
    <property type="match status" value="1"/>
</dbReference>
<dbReference type="Gene3D" id="3.40.50.10490">
    <property type="entry name" value="Glucose-6-phosphate isomerase like protein, domain 1"/>
    <property type="match status" value="1"/>
</dbReference>
<dbReference type="Gene3D" id="1.10.287.610">
    <property type="entry name" value="Helix hairpin bin"/>
    <property type="match status" value="1"/>
</dbReference>
<dbReference type="HAMAP" id="MF_00291_B">
    <property type="entry name" value="Ribosomal_uS2_B"/>
    <property type="match status" value="1"/>
</dbReference>
<dbReference type="InterPro" id="IPR001865">
    <property type="entry name" value="Ribosomal_uS2"/>
</dbReference>
<dbReference type="InterPro" id="IPR005706">
    <property type="entry name" value="Ribosomal_uS2_bac/mit/plastid"/>
</dbReference>
<dbReference type="InterPro" id="IPR018130">
    <property type="entry name" value="Ribosomal_uS2_CS"/>
</dbReference>
<dbReference type="InterPro" id="IPR023591">
    <property type="entry name" value="Ribosomal_uS2_flav_dom_sf"/>
</dbReference>
<dbReference type="NCBIfam" id="NF008966">
    <property type="entry name" value="PRK12311.1"/>
    <property type="match status" value="1"/>
</dbReference>
<dbReference type="NCBIfam" id="TIGR01011">
    <property type="entry name" value="rpsB_bact"/>
    <property type="match status" value="1"/>
</dbReference>
<dbReference type="PANTHER" id="PTHR12534">
    <property type="entry name" value="30S RIBOSOMAL PROTEIN S2 PROKARYOTIC AND ORGANELLAR"/>
    <property type="match status" value="1"/>
</dbReference>
<dbReference type="PANTHER" id="PTHR12534:SF0">
    <property type="entry name" value="SMALL RIBOSOMAL SUBUNIT PROTEIN US2M"/>
    <property type="match status" value="1"/>
</dbReference>
<dbReference type="Pfam" id="PF00318">
    <property type="entry name" value="Ribosomal_S2"/>
    <property type="match status" value="1"/>
</dbReference>
<dbReference type="PRINTS" id="PR00395">
    <property type="entry name" value="RIBOSOMALS2"/>
</dbReference>
<dbReference type="SUPFAM" id="SSF52313">
    <property type="entry name" value="Ribosomal protein S2"/>
    <property type="match status" value="1"/>
</dbReference>
<dbReference type="PROSITE" id="PS00962">
    <property type="entry name" value="RIBOSOMAL_S2_1"/>
    <property type="match status" value="1"/>
</dbReference>
<dbReference type="PROSITE" id="PS00963">
    <property type="entry name" value="RIBOSOMAL_S2_2"/>
    <property type="match status" value="1"/>
</dbReference>
<organism>
    <name type="scientific">Methylobacterium sp. (strain 4-46)</name>
    <dbReference type="NCBI Taxonomy" id="426117"/>
    <lineage>
        <taxon>Bacteria</taxon>
        <taxon>Pseudomonadati</taxon>
        <taxon>Pseudomonadota</taxon>
        <taxon>Alphaproteobacteria</taxon>
        <taxon>Hyphomicrobiales</taxon>
        <taxon>Methylobacteriaceae</taxon>
        <taxon>Methylobacterium</taxon>
    </lineage>
</organism>
<keyword id="KW-0687">Ribonucleoprotein</keyword>
<keyword id="KW-0689">Ribosomal protein</keyword>
<feature type="chain" id="PRO_1000115034" description="Small ribosomal subunit protein uS2">
    <location>
        <begin position="1"/>
        <end position="349"/>
    </location>
</feature>
<name>RS2_METS4</name>
<proteinExistence type="inferred from homology"/>
<sequence>MALPDFSMRQLLEAGAHFGHQSHRWNPKMQPFIFGTRNNIHIIDLAQTVPALYQALQAVSDTVAKGGRVLFVGTKRQAADVVADSARRSAQYFVNSRWLGGTLTNWKTISGSIQRLRKVDEVLAGGGQGLTKKERLMLSREKDKLEKALGGIKDMGGVPDLLFVIDTNKEQLAIKEAKRLGIPVAAIVDTNCDPDGITYVVPANDDAGRAIALYCDLIARAAIDGISRGQGALGLDIGASEEPVAEELPANLNEPEVAQVDISEPYVGEPFELLAAPRGAPDDLTKLTGVGPQLVQKLNDAGIYHYWQIAAMAPEDVAKVDAELKLNGRIARDGWINQARAFVEAAAAA</sequence>
<evidence type="ECO:0000255" key="1">
    <source>
        <dbReference type="HAMAP-Rule" id="MF_00291"/>
    </source>
</evidence>
<evidence type="ECO:0000305" key="2"/>
<gene>
    <name evidence="1" type="primary">rpsB</name>
    <name type="ordered locus">M446_4827</name>
</gene>
<reference key="1">
    <citation type="submission" date="2008-02" db="EMBL/GenBank/DDBJ databases">
        <title>Complete sequence of chromosome of Methylobacterium sp. 4-46.</title>
        <authorList>
            <consortium name="US DOE Joint Genome Institute"/>
            <person name="Copeland A."/>
            <person name="Lucas S."/>
            <person name="Lapidus A."/>
            <person name="Glavina del Rio T."/>
            <person name="Dalin E."/>
            <person name="Tice H."/>
            <person name="Bruce D."/>
            <person name="Goodwin L."/>
            <person name="Pitluck S."/>
            <person name="Chertkov O."/>
            <person name="Brettin T."/>
            <person name="Detter J.C."/>
            <person name="Han C."/>
            <person name="Kuske C.R."/>
            <person name="Schmutz J."/>
            <person name="Larimer F."/>
            <person name="Land M."/>
            <person name="Hauser L."/>
            <person name="Kyrpides N."/>
            <person name="Ivanova N."/>
            <person name="Marx C.J."/>
            <person name="Richardson P."/>
        </authorList>
    </citation>
    <scope>NUCLEOTIDE SEQUENCE [LARGE SCALE GENOMIC DNA]</scope>
    <source>
        <strain>4-46</strain>
    </source>
</reference>
<protein>
    <recommendedName>
        <fullName evidence="1">Small ribosomal subunit protein uS2</fullName>
    </recommendedName>
    <alternativeName>
        <fullName evidence="2">30S ribosomal protein S2</fullName>
    </alternativeName>
</protein>